<evidence type="ECO:0000250" key="1">
    <source>
        <dbReference type="UniProtKB" id="O58403"/>
    </source>
</evidence>
<evidence type="ECO:0000255" key="2">
    <source>
        <dbReference type="HAMAP-Rule" id="MF_00258"/>
    </source>
</evidence>
<evidence type="ECO:0000269" key="3">
    <source>
    </source>
</evidence>
<evidence type="ECO:0007744" key="4">
    <source>
        <dbReference type="PDB" id="2JFQ"/>
    </source>
</evidence>
<evidence type="ECO:0007829" key="5">
    <source>
        <dbReference type="PDB" id="2JFQ"/>
    </source>
</evidence>
<name>MURI_STAAR</name>
<dbReference type="EC" id="5.1.1.3" evidence="2 3"/>
<dbReference type="EMBL" id="BX571856">
    <property type="protein sequence ID" value="CAG40126.1"/>
    <property type="molecule type" value="Genomic_DNA"/>
</dbReference>
<dbReference type="PDB" id="2JFQ">
    <property type="method" value="X-ray"/>
    <property type="resolution" value="2.15 A"/>
    <property type="chains" value="A/B=1-266"/>
</dbReference>
<dbReference type="PDBsum" id="2JFQ"/>
<dbReference type="SMR" id="Q6GHT5"/>
<dbReference type="DIP" id="DIP-60302N"/>
<dbReference type="KEGG" id="sar:SAR1123"/>
<dbReference type="HOGENOM" id="CLU_052344_0_2_9"/>
<dbReference type="UniPathway" id="UPA00219"/>
<dbReference type="EvolutionaryTrace" id="Q6GHT5"/>
<dbReference type="Proteomes" id="UP000000596">
    <property type="component" value="Chromosome"/>
</dbReference>
<dbReference type="GO" id="GO:0008881">
    <property type="term" value="F:glutamate racemase activity"/>
    <property type="evidence" value="ECO:0007669"/>
    <property type="project" value="UniProtKB-UniRule"/>
</dbReference>
<dbReference type="GO" id="GO:0042802">
    <property type="term" value="F:identical protein binding"/>
    <property type="evidence" value="ECO:0000353"/>
    <property type="project" value="IntAct"/>
</dbReference>
<dbReference type="GO" id="GO:0071555">
    <property type="term" value="P:cell wall organization"/>
    <property type="evidence" value="ECO:0007669"/>
    <property type="project" value="UniProtKB-KW"/>
</dbReference>
<dbReference type="GO" id="GO:0009252">
    <property type="term" value="P:peptidoglycan biosynthetic process"/>
    <property type="evidence" value="ECO:0007669"/>
    <property type="project" value="UniProtKB-UniRule"/>
</dbReference>
<dbReference type="GO" id="GO:0008360">
    <property type="term" value="P:regulation of cell shape"/>
    <property type="evidence" value="ECO:0007669"/>
    <property type="project" value="UniProtKB-KW"/>
</dbReference>
<dbReference type="FunFam" id="3.40.50.1860:FF:000002">
    <property type="entry name" value="Glutamate racemase"/>
    <property type="match status" value="1"/>
</dbReference>
<dbReference type="Gene3D" id="3.40.50.1860">
    <property type="match status" value="2"/>
</dbReference>
<dbReference type="HAMAP" id="MF_00258">
    <property type="entry name" value="Glu_racemase"/>
    <property type="match status" value="1"/>
</dbReference>
<dbReference type="InterPro" id="IPR015942">
    <property type="entry name" value="Asp/Glu/hydantoin_racemase"/>
</dbReference>
<dbReference type="InterPro" id="IPR001920">
    <property type="entry name" value="Asp/Glu_race"/>
</dbReference>
<dbReference type="InterPro" id="IPR018187">
    <property type="entry name" value="Asp/Glu_racemase_AS_1"/>
</dbReference>
<dbReference type="InterPro" id="IPR033134">
    <property type="entry name" value="Asp/Glu_racemase_AS_2"/>
</dbReference>
<dbReference type="InterPro" id="IPR004391">
    <property type="entry name" value="Glu_race"/>
</dbReference>
<dbReference type="NCBIfam" id="TIGR00067">
    <property type="entry name" value="glut_race"/>
    <property type="match status" value="1"/>
</dbReference>
<dbReference type="NCBIfam" id="NF002035">
    <property type="entry name" value="PRK00865.1-3"/>
    <property type="match status" value="1"/>
</dbReference>
<dbReference type="PANTHER" id="PTHR21198">
    <property type="entry name" value="GLUTAMATE RACEMASE"/>
    <property type="match status" value="1"/>
</dbReference>
<dbReference type="PANTHER" id="PTHR21198:SF2">
    <property type="entry name" value="GLUTAMATE RACEMASE"/>
    <property type="match status" value="1"/>
</dbReference>
<dbReference type="Pfam" id="PF01177">
    <property type="entry name" value="Asp_Glu_race"/>
    <property type="match status" value="1"/>
</dbReference>
<dbReference type="SUPFAM" id="SSF53681">
    <property type="entry name" value="Aspartate/glutamate racemase"/>
    <property type="match status" value="2"/>
</dbReference>
<dbReference type="PROSITE" id="PS00923">
    <property type="entry name" value="ASP_GLU_RACEMASE_1"/>
    <property type="match status" value="1"/>
</dbReference>
<dbReference type="PROSITE" id="PS00924">
    <property type="entry name" value="ASP_GLU_RACEMASE_2"/>
    <property type="match status" value="1"/>
</dbReference>
<protein>
    <recommendedName>
        <fullName evidence="2">Glutamate racemase</fullName>
        <ecNumber evidence="2 3">5.1.1.3</ecNumber>
    </recommendedName>
</protein>
<accession>Q6GHT5</accession>
<sequence>MNKPIGVIDSGVGGLTVAKEIMRQLPNETIYYLGDIGRCPYGPRPGEQVKQYTVEIARKLMEFDIKMLVIACNTATAVALEYLQKTLSIPVIGVIEPGARTAIMTTRNQNVLVLGTEGTIKSEAYRTHIKRINPHVEVHGVACPGFVPLVEQMRYSDPTITSIVIHQTLKRWRNSESDTVILGCTHYPLLYKPIYDYFGGKKTVISSGLETAREVSALLTFSNEHASYTEHPDHRFFATGDTTHITNIIKEWLNLSVNVERISVND</sequence>
<comment type="function">
    <text evidence="2">Provides the (R)-glutamate required for cell wall biosynthesis.</text>
</comment>
<comment type="catalytic activity">
    <reaction evidence="2 3">
        <text>L-glutamate = D-glutamate</text>
        <dbReference type="Rhea" id="RHEA:12813"/>
        <dbReference type="ChEBI" id="CHEBI:29985"/>
        <dbReference type="ChEBI" id="CHEBI:29986"/>
        <dbReference type="EC" id="5.1.1.3"/>
    </reaction>
</comment>
<comment type="pathway">
    <text evidence="2">Cell wall biogenesis; peptidoglycan biosynthesis.</text>
</comment>
<comment type="subunit">
    <text evidence="3">Homodimer.</text>
</comment>
<comment type="interaction">
    <interactant intactId="EBI-15642790">
        <id>Q6GHT5</id>
    </interactant>
    <interactant intactId="EBI-15642790">
        <id>Q6GHT5</id>
        <label>murI</label>
    </interactant>
    <organismsDiffer>false</organismsDiffer>
    <experiments>4</experiments>
</comment>
<comment type="similarity">
    <text evidence="2">Belongs to the aspartate/glutamate racemases family.</text>
</comment>
<feature type="chain" id="PRO_0000095510" description="Glutamate racemase">
    <location>
        <begin position="1"/>
        <end position="266"/>
    </location>
</feature>
<feature type="active site" description="Proton donor/acceptor" evidence="1 2">
    <location>
        <position position="72"/>
    </location>
</feature>
<feature type="active site" description="Proton donor/acceptor" evidence="1 2">
    <location>
        <position position="184"/>
    </location>
</feature>
<feature type="binding site" evidence="2 3 4">
    <location>
        <begin position="9"/>
        <end position="10"/>
    </location>
    <ligand>
        <name>substrate</name>
    </ligand>
</feature>
<feature type="binding site" evidence="2 3 4">
    <location>
        <begin position="41"/>
        <end position="42"/>
    </location>
    <ligand>
        <name>substrate</name>
    </ligand>
</feature>
<feature type="binding site" evidence="2 3 4">
    <location>
        <begin position="73"/>
        <end position="74"/>
    </location>
    <ligand>
        <name>substrate</name>
    </ligand>
</feature>
<feature type="binding site" evidence="2 3 4">
    <location>
        <begin position="185"/>
        <end position="186"/>
    </location>
    <ligand>
        <name>substrate</name>
    </ligand>
</feature>
<feature type="strand" evidence="5">
    <location>
        <begin position="5"/>
        <end position="12"/>
    </location>
</feature>
<feature type="helix" evidence="5">
    <location>
        <begin position="15"/>
        <end position="24"/>
    </location>
</feature>
<feature type="strand" evidence="5">
    <location>
        <begin position="30"/>
        <end position="34"/>
    </location>
</feature>
<feature type="turn" evidence="5">
    <location>
        <begin position="36"/>
        <end position="38"/>
    </location>
</feature>
<feature type="helix" evidence="5">
    <location>
        <begin position="46"/>
        <end position="60"/>
    </location>
</feature>
<feature type="strand" evidence="5">
    <location>
        <begin position="66"/>
        <end position="70"/>
    </location>
</feature>
<feature type="helix" evidence="5">
    <location>
        <begin position="73"/>
        <end position="86"/>
    </location>
</feature>
<feature type="strand" evidence="5">
    <location>
        <begin position="88"/>
        <end position="94"/>
    </location>
</feature>
<feature type="helix" evidence="5">
    <location>
        <begin position="95"/>
        <end position="105"/>
    </location>
</feature>
<feature type="strand" evidence="5">
    <location>
        <begin position="107"/>
        <end position="115"/>
    </location>
</feature>
<feature type="helix" evidence="5">
    <location>
        <begin position="117"/>
        <end position="122"/>
    </location>
</feature>
<feature type="helix" evidence="5">
    <location>
        <begin position="124"/>
        <end position="132"/>
    </location>
</feature>
<feature type="strand" evidence="5">
    <location>
        <begin position="137"/>
        <end position="142"/>
    </location>
</feature>
<feature type="helix" evidence="5">
    <location>
        <begin position="146"/>
        <end position="151"/>
    </location>
</feature>
<feature type="helix" evidence="5">
    <location>
        <begin position="158"/>
        <end position="169"/>
    </location>
</feature>
<feature type="helix" evidence="5">
    <location>
        <begin position="170"/>
        <end position="172"/>
    </location>
</feature>
<feature type="strand" evidence="5">
    <location>
        <begin position="178"/>
        <end position="186"/>
    </location>
</feature>
<feature type="helix" evidence="5">
    <location>
        <begin position="187"/>
        <end position="190"/>
    </location>
</feature>
<feature type="helix" evidence="5">
    <location>
        <begin position="191"/>
        <end position="197"/>
    </location>
</feature>
<feature type="turn" evidence="5">
    <location>
        <begin position="198"/>
        <end position="200"/>
    </location>
</feature>
<feature type="strand" evidence="5">
    <location>
        <begin position="202"/>
        <end position="206"/>
    </location>
</feature>
<feature type="helix" evidence="5">
    <location>
        <begin position="207"/>
        <end position="221"/>
    </location>
</feature>
<feature type="strand" evidence="5">
    <location>
        <begin position="235"/>
        <end position="240"/>
    </location>
</feature>
<feature type="helix" evidence="5">
    <location>
        <begin position="243"/>
        <end position="253"/>
    </location>
</feature>
<proteinExistence type="evidence at protein level"/>
<keyword id="KW-0002">3D-structure</keyword>
<keyword id="KW-0133">Cell shape</keyword>
<keyword id="KW-0961">Cell wall biogenesis/degradation</keyword>
<keyword id="KW-0413">Isomerase</keyword>
<keyword id="KW-0573">Peptidoglycan synthesis</keyword>
<organism>
    <name type="scientific">Staphylococcus aureus (strain MRSA252)</name>
    <dbReference type="NCBI Taxonomy" id="282458"/>
    <lineage>
        <taxon>Bacteria</taxon>
        <taxon>Bacillati</taxon>
        <taxon>Bacillota</taxon>
        <taxon>Bacilli</taxon>
        <taxon>Bacillales</taxon>
        <taxon>Staphylococcaceae</taxon>
        <taxon>Staphylococcus</taxon>
    </lineage>
</organism>
<gene>
    <name evidence="2" type="primary">murI</name>
    <name type="ordered locus">SAR1123</name>
</gene>
<reference key="1">
    <citation type="journal article" date="2004" name="Proc. Natl. Acad. Sci. U.S.A.">
        <title>Complete genomes of two clinical Staphylococcus aureus strains: evidence for the rapid evolution of virulence and drug resistance.</title>
        <authorList>
            <person name="Holden M.T.G."/>
            <person name="Feil E.J."/>
            <person name="Lindsay J.A."/>
            <person name="Peacock S.J."/>
            <person name="Day N.P.J."/>
            <person name="Enright M.C."/>
            <person name="Foster T.J."/>
            <person name="Moore C.E."/>
            <person name="Hurst L."/>
            <person name="Atkin R."/>
            <person name="Barron A."/>
            <person name="Bason N."/>
            <person name="Bentley S.D."/>
            <person name="Chillingworth C."/>
            <person name="Chillingworth T."/>
            <person name="Churcher C."/>
            <person name="Clark L."/>
            <person name="Corton C."/>
            <person name="Cronin A."/>
            <person name="Doggett J."/>
            <person name="Dowd L."/>
            <person name="Feltwell T."/>
            <person name="Hance Z."/>
            <person name="Harris B."/>
            <person name="Hauser H."/>
            <person name="Holroyd S."/>
            <person name="Jagels K."/>
            <person name="James K.D."/>
            <person name="Lennard N."/>
            <person name="Line A."/>
            <person name="Mayes R."/>
            <person name="Moule S."/>
            <person name="Mungall K."/>
            <person name="Ormond D."/>
            <person name="Quail M.A."/>
            <person name="Rabbinowitsch E."/>
            <person name="Rutherford K.M."/>
            <person name="Sanders M."/>
            <person name="Sharp S."/>
            <person name="Simmonds M."/>
            <person name="Stevens K."/>
            <person name="Whitehead S."/>
            <person name="Barrell B.G."/>
            <person name="Spratt B.G."/>
            <person name="Parkhill J."/>
        </authorList>
    </citation>
    <scope>NUCLEOTIDE SEQUENCE [LARGE SCALE GENOMIC DNA]</scope>
    <source>
        <strain>MRSA252</strain>
    </source>
</reference>
<reference key="2">
    <citation type="journal article" date="2007" name="Nature">
        <title>Exploitation of structural and regulatory diversity in glutamate racemases.</title>
        <authorList>
            <person name="Lundqvist T."/>
            <person name="Fisher S.L."/>
            <person name="Kern G."/>
            <person name="Folmer R.H."/>
            <person name="Xue Y."/>
            <person name="Newton D.T."/>
            <person name="Keating T.A."/>
            <person name="Alm R.A."/>
            <person name="de Jonge B.L."/>
        </authorList>
    </citation>
    <scope>X-RAY CRYSTALLOGRAPHY (2.15 ANGSTROMS) IN COMPLEX WITH SUBSTRATE</scope>
    <scope>CATALYTIC ACTIVITY</scope>
    <scope>SUBUNIT</scope>
</reference>